<organism>
    <name type="scientific">Homo sapiens</name>
    <name type="common">Human</name>
    <dbReference type="NCBI Taxonomy" id="9606"/>
    <lineage>
        <taxon>Eukaryota</taxon>
        <taxon>Metazoa</taxon>
        <taxon>Chordata</taxon>
        <taxon>Craniata</taxon>
        <taxon>Vertebrata</taxon>
        <taxon>Euteleostomi</taxon>
        <taxon>Mammalia</taxon>
        <taxon>Eutheria</taxon>
        <taxon>Euarchontoglires</taxon>
        <taxon>Primates</taxon>
        <taxon>Haplorrhini</taxon>
        <taxon>Catarrhini</taxon>
        <taxon>Hominidae</taxon>
        <taxon>Homo</taxon>
    </lineage>
</organism>
<proteinExistence type="evidence at protein level"/>
<feature type="transit peptide" description="Mitochondrion" evidence="2">
    <location>
        <begin position="1"/>
        <end position="20"/>
    </location>
</feature>
<feature type="chain" id="PRO_0000057111" description="NAD(P)H pyrophosphatase NUDT13, mitochondrial" evidence="2">
    <location>
        <begin position="21"/>
        <end position="352"/>
    </location>
</feature>
<feature type="domain" description="Nudix hydrolase" evidence="3">
    <location>
        <begin position="196"/>
        <end position="323"/>
    </location>
</feature>
<feature type="short sequence motif" description="Nudix box" evidence="3">
    <location>
        <begin position="216"/>
        <end position="240"/>
    </location>
</feature>
<feature type="splice variant" id="VSP_054559" description="In isoform 3." evidence="5">
    <location>
        <begin position="1"/>
        <end position="126"/>
    </location>
</feature>
<feature type="splice variant" id="VSP_011417" description="In isoform 2." evidence="6">
    <location>
        <begin position="198"/>
        <end position="286"/>
    </location>
</feature>
<feature type="splice variant" id="VSP_055695" description="In isoform 4." evidence="6">
    <original>MAPVAITLVSDGTRCLLARQSSFPKGMYSALAGFCDIG</original>
    <variation>VKVWKRPSAEKLQKRWDWRWKACSTMHPSIGPSLVAHS</variation>
    <location>
        <begin position="198"/>
        <end position="235"/>
    </location>
</feature>
<feature type="splice variant" id="VSP_055696" description="In isoform 4." evidence="6">
    <location>
        <begin position="236"/>
        <end position="352"/>
    </location>
</feature>
<feature type="sequence variant" id="VAR_034160" description="In dbSNP:rs34284214.">
    <original>G</original>
    <variation>D</variation>
    <location>
        <position position="81"/>
    </location>
</feature>
<feature type="sequence variant" id="VAR_050413" description="In dbSNP:rs17658872.">
    <original>M</original>
    <variation>V</variation>
    <location>
        <position position="273"/>
    </location>
</feature>
<dbReference type="EC" id="3.6.1.22" evidence="1"/>
<dbReference type="EMBL" id="AK300980">
    <property type="protein sequence ID" value="BAG62602.1"/>
    <property type="molecule type" value="mRNA"/>
</dbReference>
<dbReference type="EMBL" id="AC016394">
    <property type="status" value="NOT_ANNOTATED_CDS"/>
    <property type="molecule type" value="Genomic_DNA"/>
</dbReference>
<dbReference type="EMBL" id="AL731721">
    <property type="status" value="NOT_ANNOTATED_CDS"/>
    <property type="molecule type" value="Genomic_DNA"/>
</dbReference>
<dbReference type="EMBL" id="CH471083">
    <property type="protein sequence ID" value="EAW54472.1"/>
    <property type="molecule type" value="Genomic_DNA"/>
</dbReference>
<dbReference type="EMBL" id="BC038833">
    <property type="status" value="NOT_ANNOTATED_CDS"/>
    <property type="molecule type" value="mRNA"/>
</dbReference>
<dbReference type="EMBL" id="BC046173">
    <property type="protein sequence ID" value="AAH46173.2"/>
    <property type="molecule type" value="mRNA"/>
</dbReference>
<dbReference type="EMBL" id="AL050114">
    <property type="protein sequence ID" value="CAB43279.1"/>
    <property type="molecule type" value="mRNA"/>
</dbReference>
<dbReference type="EMBL" id="U88048">
    <property type="protein sequence ID" value="AAD00649.1"/>
    <property type="status" value="ALT_FRAME"/>
    <property type="molecule type" value="mRNA"/>
</dbReference>
<dbReference type="CCDS" id="CCDS31220.1">
    <molecule id="Q86X67-1"/>
</dbReference>
<dbReference type="CCDS" id="CCDS60551.1">
    <molecule id="Q86X67-4"/>
</dbReference>
<dbReference type="CCDS" id="CCDS60552.1">
    <molecule id="Q86X67-2"/>
</dbReference>
<dbReference type="CCDS" id="CCDS60553.1">
    <molecule id="Q86X67-3"/>
</dbReference>
<dbReference type="PIR" id="T08762">
    <property type="entry name" value="T08762"/>
</dbReference>
<dbReference type="RefSeq" id="NP_001269943.1">
    <molecule id="Q86X67-2"/>
    <property type="nucleotide sequence ID" value="NM_001283014.2"/>
</dbReference>
<dbReference type="RefSeq" id="NP_001269944.1">
    <molecule id="Q86X67-4"/>
    <property type="nucleotide sequence ID" value="NM_001283015.2"/>
</dbReference>
<dbReference type="RefSeq" id="NP_001269945.1">
    <molecule id="Q86X67-3"/>
    <property type="nucleotide sequence ID" value="NM_001283016.2"/>
</dbReference>
<dbReference type="RefSeq" id="NP_001269946.1">
    <property type="nucleotide sequence ID" value="NM_001283017.1"/>
</dbReference>
<dbReference type="RefSeq" id="NP_001269948.1">
    <property type="nucleotide sequence ID" value="NM_001283019.1"/>
</dbReference>
<dbReference type="RefSeq" id="NP_056985.3">
    <molecule id="Q86X67-1"/>
    <property type="nucleotide sequence ID" value="NM_015901.5"/>
</dbReference>
<dbReference type="RefSeq" id="XP_016871522.1">
    <property type="nucleotide sequence ID" value="XM_017016033.1"/>
</dbReference>
<dbReference type="RefSeq" id="XP_024303694.1">
    <molecule id="Q86X67-3"/>
    <property type="nucleotide sequence ID" value="XM_024447926.2"/>
</dbReference>
<dbReference type="RefSeq" id="XP_054221420.1">
    <molecule id="Q86X67-3"/>
    <property type="nucleotide sequence ID" value="XM_054365445.1"/>
</dbReference>
<dbReference type="SMR" id="Q86X67"/>
<dbReference type="BioGRID" id="117451">
    <property type="interactions" value="18"/>
</dbReference>
<dbReference type="FunCoup" id="Q86X67">
    <property type="interactions" value="484"/>
</dbReference>
<dbReference type="IntAct" id="Q86X67">
    <property type="interactions" value="9"/>
</dbReference>
<dbReference type="STRING" id="9606.ENSP00000349874"/>
<dbReference type="iPTMnet" id="Q86X67"/>
<dbReference type="PhosphoSitePlus" id="Q86X67"/>
<dbReference type="BioMuta" id="NUDT13"/>
<dbReference type="DMDM" id="51701672"/>
<dbReference type="jPOST" id="Q86X67"/>
<dbReference type="MassIVE" id="Q86X67"/>
<dbReference type="PaxDb" id="9606-ENSP00000349874"/>
<dbReference type="PeptideAtlas" id="Q86X67"/>
<dbReference type="ProteomicsDB" id="5254"/>
<dbReference type="ProteomicsDB" id="63810"/>
<dbReference type="ProteomicsDB" id="70247">
    <molecule id="Q86X67-1"/>
</dbReference>
<dbReference type="ProteomicsDB" id="70248">
    <molecule id="Q86X67-2"/>
</dbReference>
<dbReference type="Antibodypedia" id="29309">
    <property type="antibodies" value="65 antibodies from 20 providers"/>
</dbReference>
<dbReference type="DNASU" id="25961"/>
<dbReference type="Ensembl" id="ENST00000349051.9">
    <molecule id="Q86X67-2"/>
    <property type="protein sequence ID" value="ENSP00000335326.6"/>
    <property type="gene ID" value="ENSG00000166321.14"/>
</dbReference>
<dbReference type="Ensembl" id="ENST00000357321.9">
    <molecule id="Q86X67-1"/>
    <property type="protein sequence ID" value="ENSP00000349874.4"/>
    <property type="gene ID" value="ENSG00000166321.14"/>
</dbReference>
<dbReference type="Ensembl" id="ENST00000372997.3">
    <molecule id="Q86X67-4"/>
    <property type="protein sequence ID" value="ENSP00000362088.3"/>
    <property type="gene ID" value="ENSG00000166321.14"/>
</dbReference>
<dbReference type="Ensembl" id="ENST00000544879.5">
    <molecule id="Q86X67-3"/>
    <property type="protein sequence ID" value="ENSP00000440760.1"/>
    <property type="gene ID" value="ENSG00000166321.14"/>
</dbReference>
<dbReference type="GeneID" id="25961"/>
<dbReference type="KEGG" id="hsa:25961"/>
<dbReference type="MANE-Select" id="ENST00000357321.9">
    <property type="protein sequence ID" value="ENSP00000349874.4"/>
    <property type="RefSeq nucleotide sequence ID" value="NM_015901.6"/>
    <property type="RefSeq protein sequence ID" value="NP_056985.3"/>
</dbReference>
<dbReference type="UCSC" id="uc001jtj.5">
    <molecule id="Q86X67-1"/>
    <property type="organism name" value="human"/>
</dbReference>
<dbReference type="AGR" id="HGNC:18827"/>
<dbReference type="CTD" id="25961"/>
<dbReference type="GeneCards" id="NUDT13"/>
<dbReference type="HGNC" id="HGNC:18827">
    <property type="gene designation" value="NUDT13"/>
</dbReference>
<dbReference type="HPA" id="ENSG00000166321">
    <property type="expression patterns" value="Low tissue specificity"/>
</dbReference>
<dbReference type="MIM" id="609233">
    <property type="type" value="gene"/>
</dbReference>
<dbReference type="neXtProt" id="NX_Q86X67"/>
<dbReference type="OpenTargets" id="ENSG00000166321"/>
<dbReference type="PharmGKB" id="PA38700"/>
<dbReference type="VEuPathDB" id="HostDB:ENSG00000166321"/>
<dbReference type="eggNOG" id="KOG3084">
    <property type="taxonomic scope" value="Eukaryota"/>
</dbReference>
<dbReference type="GeneTree" id="ENSGT00940000158879"/>
<dbReference type="HOGENOM" id="CLU_037162_0_0_1"/>
<dbReference type="InParanoid" id="Q86X67"/>
<dbReference type="OMA" id="PGQTEIH"/>
<dbReference type="OrthoDB" id="10249612at2759"/>
<dbReference type="PAN-GO" id="Q86X67">
    <property type="GO annotations" value="0 GO annotations based on evolutionary models"/>
</dbReference>
<dbReference type="PhylomeDB" id="Q86X67"/>
<dbReference type="TreeFam" id="TF106352"/>
<dbReference type="PathwayCommons" id="Q86X67"/>
<dbReference type="Reactome" id="R-HSA-499943">
    <property type="pathway name" value="Interconversion of nucleotide di- and triphosphates"/>
</dbReference>
<dbReference type="SignaLink" id="Q86X67"/>
<dbReference type="BioGRID-ORCS" id="25961">
    <property type="hits" value="8 hits in 1158 CRISPR screens"/>
</dbReference>
<dbReference type="ChiTaRS" id="NUDT13">
    <property type="organism name" value="human"/>
</dbReference>
<dbReference type="GenomeRNAi" id="25961"/>
<dbReference type="Pharos" id="Q86X67">
    <property type="development level" value="Tdark"/>
</dbReference>
<dbReference type="PRO" id="PR:Q86X67"/>
<dbReference type="Proteomes" id="UP000005640">
    <property type="component" value="Chromosome 10"/>
</dbReference>
<dbReference type="RNAct" id="Q86X67">
    <property type="molecule type" value="protein"/>
</dbReference>
<dbReference type="Bgee" id="ENSG00000166321">
    <property type="expression patterns" value="Expressed in primordial germ cell in gonad and 118 other cell types or tissues"/>
</dbReference>
<dbReference type="ExpressionAtlas" id="Q86X67">
    <property type="expression patterns" value="baseline and differential"/>
</dbReference>
<dbReference type="GO" id="GO:0005759">
    <property type="term" value="C:mitochondrial matrix"/>
    <property type="evidence" value="ECO:0000304"/>
    <property type="project" value="Reactome"/>
</dbReference>
<dbReference type="GO" id="GO:0005739">
    <property type="term" value="C:mitochondrion"/>
    <property type="evidence" value="ECO:0006056"/>
    <property type="project" value="FlyBase"/>
</dbReference>
<dbReference type="GO" id="GO:0046872">
    <property type="term" value="F:metal ion binding"/>
    <property type="evidence" value="ECO:0007669"/>
    <property type="project" value="UniProtKB-KW"/>
</dbReference>
<dbReference type="GO" id="GO:0000210">
    <property type="term" value="F:NAD+ diphosphatase activity"/>
    <property type="evidence" value="ECO:0007669"/>
    <property type="project" value="RHEA"/>
</dbReference>
<dbReference type="GO" id="GO:0035529">
    <property type="term" value="F:NADH pyrophosphatase activity"/>
    <property type="evidence" value="ECO:0000250"/>
    <property type="project" value="UniProtKB"/>
</dbReference>
<dbReference type="GO" id="GO:0010943">
    <property type="term" value="F:NADPH pyrophosphatase activity"/>
    <property type="evidence" value="ECO:0007669"/>
    <property type="project" value="RHEA"/>
</dbReference>
<dbReference type="GO" id="GO:0016462">
    <property type="term" value="F:pyrophosphatase activity"/>
    <property type="evidence" value="ECO:0000304"/>
    <property type="project" value="Reactome"/>
</dbReference>
<dbReference type="GO" id="GO:0006734">
    <property type="term" value="P:NADH metabolic process"/>
    <property type="evidence" value="ECO:0007669"/>
    <property type="project" value="Ensembl"/>
</dbReference>
<dbReference type="GO" id="GO:0006742">
    <property type="term" value="P:NADP catabolic process"/>
    <property type="evidence" value="ECO:0007669"/>
    <property type="project" value="Ensembl"/>
</dbReference>
<dbReference type="GO" id="GO:0015949">
    <property type="term" value="P:nucleobase-containing small molecule interconversion"/>
    <property type="evidence" value="ECO:0000304"/>
    <property type="project" value="Reactome"/>
</dbReference>
<dbReference type="CDD" id="cd03429">
    <property type="entry name" value="NUDIX_NADH_pyrophosphatase_Nudt13"/>
    <property type="match status" value="1"/>
</dbReference>
<dbReference type="FunFam" id="3.90.79.10:FF:000059">
    <property type="entry name" value="Nucleoside diphosphate-linked moiety X motif 13"/>
    <property type="match status" value="1"/>
</dbReference>
<dbReference type="FunFam" id="3.90.79.20:FF:000003">
    <property type="entry name" value="Nucleoside diphosphate-linked moiety X motif 13"/>
    <property type="match status" value="1"/>
</dbReference>
<dbReference type="Gene3D" id="3.90.79.20">
    <property type="match status" value="1"/>
</dbReference>
<dbReference type="Gene3D" id="3.90.79.10">
    <property type="entry name" value="Nucleoside Triphosphate Pyrophosphohydrolase"/>
    <property type="match status" value="1"/>
</dbReference>
<dbReference type="InterPro" id="IPR015375">
    <property type="entry name" value="NADH_PPase-like_N"/>
</dbReference>
<dbReference type="InterPro" id="IPR049734">
    <property type="entry name" value="NudC-like_C"/>
</dbReference>
<dbReference type="InterPro" id="IPR015797">
    <property type="entry name" value="NUDIX_hydrolase-like_dom_sf"/>
</dbReference>
<dbReference type="InterPro" id="IPR020084">
    <property type="entry name" value="NUDIX_hydrolase_CS"/>
</dbReference>
<dbReference type="InterPro" id="IPR000086">
    <property type="entry name" value="NUDIX_hydrolase_dom"/>
</dbReference>
<dbReference type="InterPro" id="IPR015376">
    <property type="entry name" value="Znr_NADH_PPase"/>
</dbReference>
<dbReference type="NCBIfam" id="NF001299">
    <property type="entry name" value="PRK00241.1"/>
    <property type="match status" value="1"/>
</dbReference>
<dbReference type="PANTHER" id="PTHR11383:SF3">
    <property type="entry name" value="NAD(P)H PYROPHOSPHATASE NUDT13, MITOCHONDRIAL"/>
    <property type="match status" value="1"/>
</dbReference>
<dbReference type="PANTHER" id="PTHR11383">
    <property type="entry name" value="NUCLEOSIDE DIPHOSPHATE-LINKED MOIETY X MOTIF 13"/>
    <property type="match status" value="1"/>
</dbReference>
<dbReference type="Pfam" id="PF00293">
    <property type="entry name" value="NUDIX"/>
    <property type="match status" value="1"/>
</dbReference>
<dbReference type="Pfam" id="PF09296">
    <property type="entry name" value="NUDIX-like"/>
    <property type="match status" value="1"/>
</dbReference>
<dbReference type="Pfam" id="PF09297">
    <property type="entry name" value="Zn_ribbon_NUD"/>
    <property type="match status" value="1"/>
</dbReference>
<dbReference type="SUPFAM" id="SSF55811">
    <property type="entry name" value="Nudix"/>
    <property type="match status" value="1"/>
</dbReference>
<dbReference type="PROSITE" id="PS51462">
    <property type="entry name" value="NUDIX"/>
    <property type="match status" value="1"/>
</dbReference>
<dbReference type="PROSITE" id="PS00893">
    <property type="entry name" value="NUDIX_BOX"/>
    <property type="match status" value="1"/>
</dbReference>
<evidence type="ECO:0000250" key="1">
    <source>
        <dbReference type="UniProtKB" id="Q8JZU0"/>
    </source>
</evidence>
<evidence type="ECO:0000255" key="2"/>
<evidence type="ECO:0000255" key="3">
    <source>
        <dbReference type="PROSITE-ProRule" id="PRU00794"/>
    </source>
</evidence>
<evidence type="ECO:0000269" key="4">
    <source ref="6"/>
</evidence>
<evidence type="ECO:0000303" key="5">
    <source>
    </source>
</evidence>
<evidence type="ECO:0000303" key="6">
    <source>
    </source>
</evidence>
<evidence type="ECO:0000305" key="7"/>
<evidence type="ECO:0000312" key="8">
    <source>
        <dbReference type="EMBL" id="AAH46173.2"/>
    </source>
</evidence>
<evidence type="ECO:0000312" key="9">
    <source>
        <dbReference type="EMBL" id="CAB43279.1"/>
    </source>
</evidence>
<evidence type="ECO:0000312" key="10">
    <source>
        <dbReference type="HGNC" id="HGNC:18827"/>
    </source>
</evidence>
<sequence>MSLYCGIACRRKFFWCYRLLSTYVTKTRYLFELKEDDDACKKAQQTGAFYLFHSLAPLLQTSAHQYLAPRHSLLELERLLGKFGQDAQRIEDSVLIGCSEQQEAWFALDLGLDSSFSISASLHKPEMETELKGSFIELRKALFQLNARDASLLSTAQALLRWHDAHQFCSRSGQPTKKNVAGSKRVCPSNNIIYYPQMAPVAITLVSDGTRCLLARQSSFPKGMYSALAGFCDIGESVEETIRREVAEEVGLEVESLQYYASQHWPFPSGSLMIACHATVKPGQTEIQVNLRELETAAWFSHDEVATALKRKGPYTQQQNGTFPFWLPPKLAISHQLIKEWVEKQTCSSLPA</sequence>
<keyword id="KW-0025">Alternative splicing</keyword>
<keyword id="KW-0378">Hydrolase</keyword>
<keyword id="KW-0460">Magnesium</keyword>
<keyword id="KW-0464">Manganese</keyword>
<keyword id="KW-0479">Metal-binding</keyword>
<keyword id="KW-0496">Mitochondrion</keyword>
<keyword id="KW-0520">NAD</keyword>
<keyword id="KW-0521">NADP</keyword>
<keyword id="KW-1267">Proteomics identification</keyword>
<keyword id="KW-1185">Reference proteome</keyword>
<keyword id="KW-0809">Transit peptide</keyword>
<name>NUD13_HUMAN</name>
<comment type="function">
    <text evidence="1">NAD(P)H pyrophosphatase that hydrolyzes NADH into NMNH and AMP, and NADPH into NMNH and 2',5'-ADP. Has a marked preference for the reduced pyridine nucleotides. Does not show activity toward NAD-capped RNAs; the NAD-cap is an atypical cap present at the 5'-end of some RNAs.</text>
</comment>
<comment type="catalytic activity">
    <reaction evidence="1">
        <text>NADH + H2O = reduced beta-nicotinamide D-ribonucleotide + AMP + 2 H(+)</text>
        <dbReference type="Rhea" id="RHEA:48868"/>
        <dbReference type="ChEBI" id="CHEBI:15377"/>
        <dbReference type="ChEBI" id="CHEBI:15378"/>
        <dbReference type="ChEBI" id="CHEBI:57945"/>
        <dbReference type="ChEBI" id="CHEBI:90832"/>
        <dbReference type="ChEBI" id="CHEBI:456215"/>
        <dbReference type="EC" id="3.6.1.22"/>
    </reaction>
    <physiologicalReaction direction="left-to-right" evidence="1">
        <dbReference type="Rhea" id="RHEA:48869"/>
    </physiologicalReaction>
</comment>
<comment type="catalytic activity">
    <reaction evidence="1">
        <text>NAD(+) + H2O = beta-nicotinamide D-ribonucleotide + AMP + 2 H(+)</text>
        <dbReference type="Rhea" id="RHEA:11800"/>
        <dbReference type="ChEBI" id="CHEBI:14649"/>
        <dbReference type="ChEBI" id="CHEBI:15377"/>
        <dbReference type="ChEBI" id="CHEBI:15378"/>
        <dbReference type="ChEBI" id="CHEBI:57540"/>
        <dbReference type="ChEBI" id="CHEBI:456215"/>
        <dbReference type="EC" id="3.6.1.22"/>
    </reaction>
    <physiologicalReaction direction="left-to-right" evidence="1">
        <dbReference type="Rhea" id="RHEA:11801"/>
    </physiologicalReaction>
</comment>
<comment type="catalytic activity">
    <reaction evidence="1">
        <text>NADPH + H2O = reduced beta-nicotinamide D-ribonucleotide + adenosine 2',5'-bisphosphate + 2 H(+)</text>
        <dbReference type="Rhea" id="RHEA:60820"/>
        <dbReference type="ChEBI" id="CHEBI:15377"/>
        <dbReference type="ChEBI" id="CHEBI:15378"/>
        <dbReference type="ChEBI" id="CHEBI:57783"/>
        <dbReference type="ChEBI" id="CHEBI:90832"/>
        <dbReference type="ChEBI" id="CHEBI:194156"/>
    </reaction>
    <physiologicalReaction direction="left-to-right" evidence="1">
        <dbReference type="Rhea" id="RHEA:60821"/>
    </physiologicalReaction>
</comment>
<comment type="cofactor">
    <cofactor evidence="1">
        <name>Mg(2+)</name>
        <dbReference type="ChEBI" id="CHEBI:18420"/>
    </cofactor>
    <cofactor evidence="1">
        <name>Mn(2+)</name>
        <dbReference type="ChEBI" id="CHEBI:29035"/>
    </cofactor>
    <text evidence="1">Divalent metal cations. Mg(2+) or Mn(2+).</text>
</comment>
<comment type="subcellular location">
    <subcellularLocation>
        <location evidence="1">Mitochondrion</location>
    </subcellularLocation>
</comment>
<comment type="alternative products">
    <event type="alternative splicing"/>
    <isoform>
        <id>Q86X67-1</id>
        <name>1</name>
        <sequence type="displayed"/>
    </isoform>
    <isoform>
        <id>Q86X67-2</id>
        <name>2</name>
        <sequence type="described" ref="VSP_011417"/>
    </isoform>
    <isoform>
        <id>Q86X67-3</id>
        <name>3</name>
        <sequence type="described" ref="VSP_054559"/>
    </isoform>
    <isoform>
        <id>Q86X67-4</id>
        <name>4</name>
        <sequence type="described" ref="VSP_055695 VSP_055696"/>
    </isoform>
</comment>
<comment type="tissue specificity">
    <text evidence="4">Highly expressed in metastasis-suppressed chromosome 6 melanoma hybrids.</text>
</comment>
<comment type="similarity">
    <text evidence="7">Belongs to the Nudix hydrolase family.</text>
</comment>
<comment type="sequence caution" evidence="7">
    <conflict type="frameshift">
        <sequence resource="EMBL-CDS" id="AAD00649"/>
    </conflict>
</comment>
<gene>
    <name evidence="10" type="primary">NUDT13</name>
</gene>
<accession>Q86X67</accession>
<accession>B4DV90</accession>
<accession>O95650</accession>
<accession>Q5SQM4</accession>
<accession>Q5SQM5</accession>
<accession>Q5SQM6</accession>
<accession>Q9Y3X2</accession>
<protein>
    <recommendedName>
        <fullName evidence="7">NAD(P)H pyrophosphatase NUDT13, mitochondrial</fullName>
        <ecNumber evidence="1">3.6.1.22</ecNumber>
    </recommendedName>
    <alternativeName>
        <fullName>Nucleoside diphosphate-linked moiety X motif 13</fullName>
        <shortName>Nudix motif 13</shortName>
    </alternativeName>
    <alternativeName>
        <fullName>Protein KiSS-16</fullName>
    </alternativeName>
</protein>
<reference key="1">
    <citation type="journal article" date="2004" name="Nat. Genet.">
        <title>Complete sequencing and characterization of 21,243 full-length human cDNAs.</title>
        <authorList>
            <person name="Ota T."/>
            <person name="Suzuki Y."/>
            <person name="Nishikawa T."/>
            <person name="Otsuki T."/>
            <person name="Sugiyama T."/>
            <person name="Irie R."/>
            <person name="Wakamatsu A."/>
            <person name="Hayashi K."/>
            <person name="Sato H."/>
            <person name="Nagai K."/>
            <person name="Kimura K."/>
            <person name="Makita H."/>
            <person name="Sekine M."/>
            <person name="Obayashi M."/>
            <person name="Nishi T."/>
            <person name="Shibahara T."/>
            <person name="Tanaka T."/>
            <person name="Ishii S."/>
            <person name="Yamamoto J."/>
            <person name="Saito K."/>
            <person name="Kawai Y."/>
            <person name="Isono Y."/>
            <person name="Nakamura Y."/>
            <person name="Nagahari K."/>
            <person name="Murakami K."/>
            <person name="Yasuda T."/>
            <person name="Iwayanagi T."/>
            <person name="Wagatsuma M."/>
            <person name="Shiratori A."/>
            <person name="Sudo H."/>
            <person name="Hosoiri T."/>
            <person name="Kaku Y."/>
            <person name="Kodaira H."/>
            <person name="Kondo H."/>
            <person name="Sugawara M."/>
            <person name="Takahashi M."/>
            <person name="Kanda K."/>
            <person name="Yokoi T."/>
            <person name="Furuya T."/>
            <person name="Kikkawa E."/>
            <person name="Omura Y."/>
            <person name="Abe K."/>
            <person name="Kamihara K."/>
            <person name="Katsuta N."/>
            <person name="Sato K."/>
            <person name="Tanikawa M."/>
            <person name="Yamazaki M."/>
            <person name="Ninomiya K."/>
            <person name="Ishibashi T."/>
            <person name="Yamashita H."/>
            <person name="Murakawa K."/>
            <person name="Fujimori K."/>
            <person name="Tanai H."/>
            <person name="Kimata M."/>
            <person name="Watanabe M."/>
            <person name="Hiraoka S."/>
            <person name="Chiba Y."/>
            <person name="Ishida S."/>
            <person name="Ono Y."/>
            <person name="Takiguchi S."/>
            <person name="Watanabe S."/>
            <person name="Yosida M."/>
            <person name="Hotuta T."/>
            <person name="Kusano J."/>
            <person name="Kanehori K."/>
            <person name="Takahashi-Fujii A."/>
            <person name="Hara H."/>
            <person name="Tanase T.-O."/>
            <person name="Nomura Y."/>
            <person name="Togiya S."/>
            <person name="Komai F."/>
            <person name="Hara R."/>
            <person name="Takeuchi K."/>
            <person name="Arita M."/>
            <person name="Imose N."/>
            <person name="Musashino K."/>
            <person name="Yuuki H."/>
            <person name="Oshima A."/>
            <person name="Sasaki N."/>
            <person name="Aotsuka S."/>
            <person name="Yoshikawa Y."/>
            <person name="Matsunawa H."/>
            <person name="Ichihara T."/>
            <person name="Shiohata N."/>
            <person name="Sano S."/>
            <person name="Moriya S."/>
            <person name="Momiyama H."/>
            <person name="Satoh N."/>
            <person name="Takami S."/>
            <person name="Terashima Y."/>
            <person name="Suzuki O."/>
            <person name="Nakagawa S."/>
            <person name="Senoh A."/>
            <person name="Mizoguchi H."/>
            <person name="Goto Y."/>
            <person name="Shimizu F."/>
            <person name="Wakebe H."/>
            <person name="Hishigaki H."/>
            <person name="Watanabe T."/>
            <person name="Sugiyama A."/>
            <person name="Takemoto M."/>
            <person name="Kawakami B."/>
            <person name="Yamazaki M."/>
            <person name="Watanabe K."/>
            <person name="Kumagai A."/>
            <person name="Itakura S."/>
            <person name="Fukuzumi Y."/>
            <person name="Fujimori Y."/>
            <person name="Komiyama M."/>
            <person name="Tashiro H."/>
            <person name="Tanigami A."/>
            <person name="Fujiwara T."/>
            <person name="Ono T."/>
            <person name="Yamada K."/>
            <person name="Fujii Y."/>
            <person name="Ozaki K."/>
            <person name="Hirao M."/>
            <person name="Ohmori Y."/>
            <person name="Kawabata A."/>
            <person name="Hikiji T."/>
            <person name="Kobatake N."/>
            <person name="Inagaki H."/>
            <person name="Ikema Y."/>
            <person name="Okamoto S."/>
            <person name="Okitani R."/>
            <person name="Kawakami T."/>
            <person name="Noguchi S."/>
            <person name="Itoh T."/>
            <person name="Shigeta K."/>
            <person name="Senba T."/>
            <person name="Matsumura K."/>
            <person name="Nakajima Y."/>
            <person name="Mizuno T."/>
            <person name="Morinaga M."/>
            <person name="Sasaki M."/>
            <person name="Togashi T."/>
            <person name="Oyama M."/>
            <person name="Hata H."/>
            <person name="Watanabe M."/>
            <person name="Komatsu T."/>
            <person name="Mizushima-Sugano J."/>
            <person name="Satoh T."/>
            <person name="Shirai Y."/>
            <person name="Takahashi Y."/>
            <person name="Nakagawa K."/>
            <person name="Okumura K."/>
            <person name="Nagase T."/>
            <person name="Nomura N."/>
            <person name="Kikuchi H."/>
            <person name="Masuho Y."/>
            <person name="Yamashita R."/>
            <person name="Nakai K."/>
            <person name="Yada T."/>
            <person name="Nakamura Y."/>
            <person name="Ohara O."/>
            <person name="Isogai T."/>
            <person name="Sugano S."/>
        </authorList>
    </citation>
    <scope>NUCLEOTIDE SEQUENCE [LARGE SCALE MRNA] (ISOFORM 3)</scope>
    <source>
        <tissue>Small intestine</tissue>
    </source>
</reference>
<reference key="2">
    <citation type="journal article" date="2004" name="Nature">
        <title>The DNA sequence and comparative analysis of human chromosome 10.</title>
        <authorList>
            <person name="Deloukas P."/>
            <person name="Earthrowl M.E."/>
            <person name="Grafham D.V."/>
            <person name="Rubenfield M."/>
            <person name="French L."/>
            <person name="Steward C.A."/>
            <person name="Sims S.K."/>
            <person name="Jones M.C."/>
            <person name="Searle S."/>
            <person name="Scott C."/>
            <person name="Howe K."/>
            <person name="Hunt S.E."/>
            <person name="Andrews T.D."/>
            <person name="Gilbert J.G.R."/>
            <person name="Swarbreck D."/>
            <person name="Ashurst J.L."/>
            <person name="Taylor A."/>
            <person name="Battles J."/>
            <person name="Bird C.P."/>
            <person name="Ainscough R."/>
            <person name="Almeida J.P."/>
            <person name="Ashwell R.I.S."/>
            <person name="Ambrose K.D."/>
            <person name="Babbage A.K."/>
            <person name="Bagguley C.L."/>
            <person name="Bailey J."/>
            <person name="Banerjee R."/>
            <person name="Bates K."/>
            <person name="Beasley H."/>
            <person name="Bray-Allen S."/>
            <person name="Brown A.J."/>
            <person name="Brown J.Y."/>
            <person name="Burford D.C."/>
            <person name="Burrill W."/>
            <person name="Burton J."/>
            <person name="Cahill P."/>
            <person name="Camire D."/>
            <person name="Carter N.P."/>
            <person name="Chapman J.C."/>
            <person name="Clark S.Y."/>
            <person name="Clarke G."/>
            <person name="Clee C.M."/>
            <person name="Clegg S."/>
            <person name="Corby N."/>
            <person name="Coulson A."/>
            <person name="Dhami P."/>
            <person name="Dutta I."/>
            <person name="Dunn M."/>
            <person name="Faulkner L."/>
            <person name="Frankish A."/>
            <person name="Frankland J.A."/>
            <person name="Garner P."/>
            <person name="Garnett J."/>
            <person name="Gribble S."/>
            <person name="Griffiths C."/>
            <person name="Grocock R."/>
            <person name="Gustafson E."/>
            <person name="Hammond S."/>
            <person name="Harley J.L."/>
            <person name="Hart E."/>
            <person name="Heath P.D."/>
            <person name="Ho T.P."/>
            <person name="Hopkins B."/>
            <person name="Horne J."/>
            <person name="Howden P.J."/>
            <person name="Huckle E."/>
            <person name="Hynds C."/>
            <person name="Johnson C."/>
            <person name="Johnson D."/>
            <person name="Kana A."/>
            <person name="Kay M."/>
            <person name="Kimberley A.M."/>
            <person name="Kershaw J.K."/>
            <person name="Kokkinaki M."/>
            <person name="Laird G.K."/>
            <person name="Lawlor S."/>
            <person name="Lee H.M."/>
            <person name="Leongamornlert D.A."/>
            <person name="Laird G."/>
            <person name="Lloyd C."/>
            <person name="Lloyd D.M."/>
            <person name="Loveland J."/>
            <person name="Lovell J."/>
            <person name="McLaren S."/>
            <person name="McLay K.E."/>
            <person name="McMurray A."/>
            <person name="Mashreghi-Mohammadi M."/>
            <person name="Matthews L."/>
            <person name="Milne S."/>
            <person name="Nickerson T."/>
            <person name="Nguyen M."/>
            <person name="Overton-Larty E."/>
            <person name="Palmer S.A."/>
            <person name="Pearce A.V."/>
            <person name="Peck A.I."/>
            <person name="Pelan S."/>
            <person name="Phillimore B."/>
            <person name="Porter K."/>
            <person name="Rice C.M."/>
            <person name="Rogosin A."/>
            <person name="Ross M.T."/>
            <person name="Sarafidou T."/>
            <person name="Sehra H.K."/>
            <person name="Shownkeen R."/>
            <person name="Skuce C.D."/>
            <person name="Smith M."/>
            <person name="Standring L."/>
            <person name="Sycamore N."/>
            <person name="Tester J."/>
            <person name="Thorpe A."/>
            <person name="Torcasso W."/>
            <person name="Tracey A."/>
            <person name="Tromans A."/>
            <person name="Tsolas J."/>
            <person name="Wall M."/>
            <person name="Walsh J."/>
            <person name="Wang H."/>
            <person name="Weinstock K."/>
            <person name="West A.P."/>
            <person name="Willey D.L."/>
            <person name="Whitehead S.L."/>
            <person name="Wilming L."/>
            <person name="Wray P.W."/>
            <person name="Young L."/>
            <person name="Chen Y."/>
            <person name="Lovering R.C."/>
            <person name="Moschonas N.K."/>
            <person name="Siebert R."/>
            <person name="Fechtel K."/>
            <person name="Bentley D."/>
            <person name="Durbin R.M."/>
            <person name="Hubbard T."/>
            <person name="Doucette-Stamm L."/>
            <person name="Beck S."/>
            <person name="Smith D.R."/>
            <person name="Rogers J."/>
        </authorList>
    </citation>
    <scope>NUCLEOTIDE SEQUENCE [LARGE SCALE GENOMIC DNA]</scope>
</reference>
<reference evidence="7 9" key="3">
    <citation type="submission" date="2005-07" db="EMBL/GenBank/DDBJ databases">
        <authorList>
            <person name="Mural R.J."/>
            <person name="Istrail S."/>
            <person name="Sutton G.G."/>
            <person name="Florea L."/>
            <person name="Halpern A.L."/>
            <person name="Mobarry C.M."/>
            <person name="Lippert R."/>
            <person name="Walenz B."/>
            <person name="Shatkay H."/>
            <person name="Dew I."/>
            <person name="Miller J.R."/>
            <person name="Flanigan M.J."/>
            <person name="Edwards N.J."/>
            <person name="Bolanos R."/>
            <person name="Fasulo D."/>
            <person name="Halldorsson B.V."/>
            <person name="Hannenhalli S."/>
            <person name="Turner R."/>
            <person name="Yooseph S."/>
            <person name="Lu F."/>
            <person name="Nusskern D.R."/>
            <person name="Shue B.C."/>
            <person name="Zheng X.H."/>
            <person name="Zhong F."/>
            <person name="Delcher A.L."/>
            <person name="Huson D.H."/>
            <person name="Kravitz S.A."/>
            <person name="Mouchard L."/>
            <person name="Reinert K."/>
            <person name="Remington K.A."/>
            <person name="Clark A.G."/>
            <person name="Waterman M.S."/>
            <person name="Eichler E.E."/>
            <person name="Adams M.D."/>
            <person name="Hunkapiller M.W."/>
            <person name="Myers E.W."/>
            <person name="Venter J.C."/>
        </authorList>
    </citation>
    <scope>NUCLEOTIDE SEQUENCE [LARGE SCALE GENOMIC DNA]</scope>
</reference>
<reference evidence="8" key="4">
    <citation type="journal article" date="2004" name="Genome Res.">
        <title>The status, quality, and expansion of the NIH full-length cDNA project: the Mammalian Gene Collection (MGC).</title>
        <authorList>
            <consortium name="The MGC Project Team"/>
        </authorList>
    </citation>
    <scope>NUCLEOTIDE SEQUENCE [LARGE SCALE MRNA] (ISOFORMS 2 AND 4)</scope>
    <source>
        <tissue evidence="8">Eye</tissue>
    </source>
</reference>
<reference key="5">
    <citation type="journal article" date="2007" name="BMC Genomics">
        <title>The full-ORF clone resource of the German cDNA consortium.</title>
        <authorList>
            <person name="Bechtel S."/>
            <person name="Rosenfelder H."/>
            <person name="Duda A."/>
            <person name="Schmidt C.P."/>
            <person name="Ernst U."/>
            <person name="Wellenreuther R."/>
            <person name="Mehrle A."/>
            <person name="Schuster C."/>
            <person name="Bahr A."/>
            <person name="Bloecker H."/>
            <person name="Heubner D."/>
            <person name="Hoerlein A."/>
            <person name="Michel G."/>
            <person name="Wedler H."/>
            <person name="Koehrer K."/>
            <person name="Ottenwaelder B."/>
            <person name="Poustka A."/>
            <person name="Wiemann S."/>
            <person name="Schupp I."/>
        </authorList>
    </citation>
    <scope>NUCLEOTIDE SEQUENCE [LARGE SCALE MRNA] OF 81-352 (ISOFORM 1)</scope>
    <source>
        <tissue>Uterus</tissue>
    </source>
</reference>
<reference evidence="7 9" key="6">
    <citation type="submission" date="1997-02" db="EMBL/GenBank/DDBJ databases">
        <authorList>
            <person name="Welch D.R."/>
            <person name="Lee J.-H."/>
        </authorList>
    </citation>
    <scope>NUCLEOTIDE SEQUENCE [MRNA] OF 156-236</scope>
    <scope>TISSUE SPECIFICITY</scope>
    <source>
        <tissue>Melanoma</tissue>
    </source>
</reference>